<evidence type="ECO:0000250" key="1"/>
<evidence type="ECO:0000256" key="2">
    <source>
        <dbReference type="SAM" id="MobiDB-lite"/>
    </source>
</evidence>
<evidence type="ECO:0000305" key="3"/>
<accession>Q3T0H0</accession>
<feature type="chain" id="PRO_0000226150" description="Leucine carboxyl methyltransferase 1">
    <location>
        <begin position="1"/>
        <end position="332"/>
    </location>
</feature>
<feature type="region of interest" description="Disordered" evidence="2">
    <location>
        <begin position="1"/>
        <end position="23"/>
    </location>
</feature>
<feature type="binding site" evidence="1">
    <location>
        <position position="71"/>
    </location>
    <ligand>
        <name>S-adenosyl-L-methionine</name>
        <dbReference type="ChEBI" id="CHEBI:59789"/>
    </ligand>
</feature>
<feature type="binding site" evidence="1">
    <location>
        <position position="96"/>
    </location>
    <ligand>
        <name>S-adenosyl-L-methionine</name>
        <dbReference type="ChEBI" id="CHEBI:59789"/>
    </ligand>
</feature>
<feature type="binding site" evidence="1">
    <location>
        <position position="120"/>
    </location>
    <ligand>
        <name>S-adenosyl-L-methionine</name>
        <dbReference type="ChEBI" id="CHEBI:59789"/>
    </ligand>
</feature>
<feature type="binding site" evidence="1">
    <location>
        <begin position="169"/>
        <end position="170"/>
    </location>
    <ligand>
        <name>S-adenosyl-L-methionine</name>
        <dbReference type="ChEBI" id="CHEBI:59789"/>
    </ligand>
</feature>
<feature type="binding site" evidence="1">
    <location>
        <position position="196"/>
    </location>
    <ligand>
        <name>S-adenosyl-L-methionine</name>
        <dbReference type="ChEBI" id="CHEBI:59789"/>
    </ligand>
</feature>
<name>LCMT1_BOVIN</name>
<proteinExistence type="evidence at transcript level"/>
<keyword id="KW-0489">Methyltransferase</keyword>
<keyword id="KW-1185">Reference proteome</keyword>
<keyword id="KW-0949">S-adenosyl-L-methionine</keyword>
<keyword id="KW-0808">Transferase</keyword>
<comment type="function">
    <text evidence="1">Methylates the carboxyl group of the C-terminal leucine residue of protein phosphatase 2A catalytic subunits to form alpha-leucine ester residues.</text>
</comment>
<comment type="catalytic activity">
    <reaction>
        <text>[phosphatase 2A protein]-C-terminal L-leucine + S-adenosyl-L-methionine = [phosphatase 2A protein]-C-terminal L-leucine methyl ester + S-adenosyl-L-homocysteine</text>
        <dbReference type="Rhea" id="RHEA:48544"/>
        <dbReference type="Rhea" id="RHEA-COMP:12134"/>
        <dbReference type="Rhea" id="RHEA-COMP:12135"/>
        <dbReference type="ChEBI" id="CHEBI:57856"/>
        <dbReference type="ChEBI" id="CHEBI:59789"/>
        <dbReference type="ChEBI" id="CHEBI:90516"/>
        <dbReference type="ChEBI" id="CHEBI:90517"/>
        <dbReference type="EC" id="2.1.1.233"/>
    </reaction>
</comment>
<comment type="similarity">
    <text evidence="3">Belongs to the methyltransferase superfamily. LCMT family.</text>
</comment>
<reference key="1">
    <citation type="submission" date="2005-08" db="EMBL/GenBank/DDBJ databases">
        <authorList>
            <consortium name="NIH - Mammalian Gene Collection (MGC) project"/>
        </authorList>
    </citation>
    <scope>NUCLEOTIDE SEQUENCE [LARGE SCALE MRNA]</scope>
    <source>
        <strain>Crossbred X Angus</strain>
        <tissue>Ileum</tissue>
    </source>
</reference>
<organism>
    <name type="scientific">Bos taurus</name>
    <name type="common">Bovine</name>
    <dbReference type="NCBI Taxonomy" id="9913"/>
    <lineage>
        <taxon>Eukaryota</taxon>
        <taxon>Metazoa</taxon>
        <taxon>Chordata</taxon>
        <taxon>Craniata</taxon>
        <taxon>Vertebrata</taxon>
        <taxon>Euteleostomi</taxon>
        <taxon>Mammalia</taxon>
        <taxon>Eutheria</taxon>
        <taxon>Laurasiatheria</taxon>
        <taxon>Artiodactyla</taxon>
        <taxon>Ruminantia</taxon>
        <taxon>Pecora</taxon>
        <taxon>Bovidae</taxon>
        <taxon>Bovinae</taxon>
        <taxon>Bos</taxon>
    </lineage>
</organism>
<protein>
    <recommendedName>
        <fullName>Leucine carboxyl methyltransferase 1</fullName>
        <ecNumber>2.1.1.233</ecNumber>
    </recommendedName>
    <alternativeName>
        <fullName>[Phosphatase 2A protein]-leucine-carboxy methyltransferase 1</fullName>
    </alternativeName>
</protein>
<dbReference type="EC" id="2.1.1.233"/>
<dbReference type="EMBL" id="BC102399">
    <property type="protein sequence ID" value="AAI02400.1"/>
    <property type="molecule type" value="mRNA"/>
</dbReference>
<dbReference type="RefSeq" id="NP_001069956.1">
    <property type="nucleotide sequence ID" value="NM_001076488.1"/>
</dbReference>
<dbReference type="SMR" id="Q3T0H0"/>
<dbReference type="FunCoup" id="Q3T0H0">
    <property type="interactions" value="3870"/>
</dbReference>
<dbReference type="STRING" id="9913.ENSBTAP00000037258"/>
<dbReference type="PaxDb" id="9913-ENSBTAP00000037258"/>
<dbReference type="Ensembl" id="ENSBTAT00000037425.6">
    <property type="protein sequence ID" value="ENSBTAP00000037258.4"/>
    <property type="gene ID" value="ENSBTAG00000013169.7"/>
</dbReference>
<dbReference type="GeneID" id="618021"/>
<dbReference type="KEGG" id="bta:618021"/>
<dbReference type="CTD" id="51451"/>
<dbReference type="VEuPathDB" id="HostDB:ENSBTAG00000013169"/>
<dbReference type="VGNC" id="VGNC:30812">
    <property type="gene designation" value="LCMT1"/>
</dbReference>
<dbReference type="eggNOG" id="KOG2918">
    <property type="taxonomic scope" value="Eukaryota"/>
</dbReference>
<dbReference type="GeneTree" id="ENSGT00940000156372"/>
<dbReference type="HOGENOM" id="CLU_031312_0_0_1"/>
<dbReference type="InParanoid" id="Q3T0H0"/>
<dbReference type="OMA" id="IIYEPIR"/>
<dbReference type="OrthoDB" id="203237at2759"/>
<dbReference type="TreeFam" id="TF315087"/>
<dbReference type="BRENDA" id="2.1.1.233">
    <property type="organism ID" value="908"/>
</dbReference>
<dbReference type="Reactome" id="R-BTA-69273">
    <property type="pathway name" value="Cyclin A/B1/B2 associated events during G2/M transition"/>
</dbReference>
<dbReference type="Proteomes" id="UP000009136">
    <property type="component" value="Chromosome 25"/>
</dbReference>
<dbReference type="Bgee" id="ENSBTAG00000013169">
    <property type="expression patterns" value="Expressed in metanephros cortex and 104 other cell types or tissues"/>
</dbReference>
<dbReference type="GO" id="GO:0005829">
    <property type="term" value="C:cytosol"/>
    <property type="evidence" value="ECO:0000318"/>
    <property type="project" value="GO_Central"/>
</dbReference>
<dbReference type="GO" id="GO:0018423">
    <property type="term" value="F:protein C-terminal leucine carboxyl O-methyltransferase activity"/>
    <property type="evidence" value="ECO:0000318"/>
    <property type="project" value="GO_Central"/>
</dbReference>
<dbReference type="GO" id="GO:0032259">
    <property type="term" value="P:methylation"/>
    <property type="evidence" value="ECO:0007669"/>
    <property type="project" value="UniProtKB-KW"/>
</dbReference>
<dbReference type="GO" id="GO:0031333">
    <property type="term" value="P:negative regulation of protein-containing complex assembly"/>
    <property type="evidence" value="ECO:0007669"/>
    <property type="project" value="Ensembl"/>
</dbReference>
<dbReference type="GO" id="GO:0042981">
    <property type="term" value="P:regulation of apoptotic process"/>
    <property type="evidence" value="ECO:0007669"/>
    <property type="project" value="Ensembl"/>
</dbReference>
<dbReference type="GO" id="GO:0010906">
    <property type="term" value="P:regulation of glucose metabolic process"/>
    <property type="evidence" value="ECO:0007669"/>
    <property type="project" value="Ensembl"/>
</dbReference>
<dbReference type="GO" id="GO:0090266">
    <property type="term" value="P:regulation of mitotic cell cycle spindle assembly checkpoint"/>
    <property type="evidence" value="ECO:0000318"/>
    <property type="project" value="GO_Central"/>
</dbReference>
<dbReference type="FunFam" id="3.40.50.150:FF:000092">
    <property type="entry name" value="Leucine carboxyl methyltransferase 1"/>
    <property type="match status" value="1"/>
</dbReference>
<dbReference type="Gene3D" id="3.40.50.150">
    <property type="entry name" value="Vaccinia Virus protein VP39"/>
    <property type="match status" value="1"/>
</dbReference>
<dbReference type="InterPro" id="IPR016651">
    <property type="entry name" value="LCMT1"/>
</dbReference>
<dbReference type="InterPro" id="IPR007213">
    <property type="entry name" value="Ppm1/Ppm2/Tcmp"/>
</dbReference>
<dbReference type="InterPro" id="IPR029063">
    <property type="entry name" value="SAM-dependent_MTases_sf"/>
</dbReference>
<dbReference type="PANTHER" id="PTHR13600">
    <property type="entry name" value="LEUCINE CARBOXYL METHYLTRANSFERASE"/>
    <property type="match status" value="1"/>
</dbReference>
<dbReference type="PANTHER" id="PTHR13600:SF33">
    <property type="entry name" value="LEUCINE CARBOXYL METHYLTRANSFERASE 1"/>
    <property type="match status" value="1"/>
</dbReference>
<dbReference type="Pfam" id="PF04072">
    <property type="entry name" value="LCM"/>
    <property type="match status" value="1"/>
</dbReference>
<dbReference type="PIRSF" id="PIRSF016305">
    <property type="entry name" value="LCM_mtfrase"/>
    <property type="match status" value="1"/>
</dbReference>
<dbReference type="SUPFAM" id="SSF53335">
    <property type="entry name" value="S-adenosyl-L-methionine-dependent methyltransferases"/>
    <property type="match status" value="1"/>
</dbReference>
<sequence>MAASLRRPSFTTCSSPTDTDDEGVRGTCEDASICKRFAVSIGYWQDPYIQHLVRLSKERKAPEINRGYFARVHGVSQLTKAFLRKTECNCQILNLGAGMDTTFWMLKDEDLLPRKYFEIDFPMIVTRKLHSIKLKPLLSKPILDLHSEDTLQMDGHMLDSTRYAIIGADLRDIADLEEKLKKCNMSTQLPTLLIAECVLVYMTPEQSANLLKWAANSFEAAMFINYEQVNMGDRFGQIMIENLRRRQCDLAGVETCKSLESQRERLLSSGWESASAIDMMEVYSRLPRAEVIRIEALEFLDEMELLEQLMQHYCLCWATKGGSELGLKEITY</sequence>
<gene>
    <name type="primary">LCMT1</name>
</gene>